<comment type="function">
    <text evidence="1 2 5 6">Acts as a nucleation-promoting factor at the surface of endosomes, where it recruits and activates the Arp2/3 complex to induce actin polymerization, playing a key role in the fission of tubules that serve as transport intermediates during endosome sorting (PubMed:18159949, PubMed:20175130). Involved in endocytic trafficking of EGF (PubMed:20175130). Involved in transferrin receptor recycling. Regulates the trafficking of endosomal alpha5beta1 integrin to the plasma membrane and involved in invasive cell migration (By similarity). In T-cells involved in endosome-to-membrane recycling of receptors including T-cell receptor (TCR), CD28 and ITGAL; proposed to be implicated in T cell proliferation and effector function. In dendritic cells involved in endosome-to-membrane recycling of major histocompatibility complex (MHC) class II probably involving retromer and subsequently allowing antigen sampling, loading and presentation during T-cell activation. Involved in Arp2/3 complex-dependent actin assembly driving Salmonella typhimurium invasion independent of ruffling (By similarity). Involved in the exocytosis of MMP14 leading to matrix remodeling during invasive migration and implicating late endosome-to-plasma membrane tubular connections and cooperation with the exocyst complex (By similarity). Involved in negative regulation of autophagy independently from its role in endosomal sorting by inhibiting BECN1 ubiquitination to inactivate PIK3C3/Vps34 activity (By similarity).</text>
</comment>
<comment type="subunit">
    <text evidence="1 2">Component of the WASH core complex also described as WASH regulatory complex (SHRC) composed of WASH (WASHC1, WASH2P or WASH3P), WASHC2 (WASHC2A or WASHC2C), WASHC3, WASHC4 and WASHC5. The WASH core complex associates with the F-actin-capping protein dimer (formed by CAPZA1, CAPZA2 or CAPZA3 and CAPZB) in a transient or substoichiometric manner which was initially described as WASH complex (PubMed:20498093). Interacts (via WHD1 region) with WASHC2C; the interaction is direct (By similarity). Interacts with alpha-tubulin. Interacts with BECN1; WASHC1 and AMBRA1 can competitively interact with BECN1. Interacts with BLOC1S2; may associate with the BLOC-1 complex. Interacts with tubulin gamma chain (TUBG1 or TUBG2). Interacts with EXOC1, EXOC4, EXOC8; in MMP14-positive endosomes in breast tumor cells; indicative for an association with the exocyst complex (By similarity).</text>
</comment>
<comment type="subcellular location">
    <subcellularLocation>
        <location evidence="6 7">Early endosome</location>
    </subcellularLocation>
    <subcellularLocation>
        <location evidence="1">Early endosome membrane</location>
    </subcellularLocation>
    <subcellularLocation>
        <location evidence="2">Recycling endosome membrane</location>
    </subcellularLocation>
    <subcellularLocation>
        <location evidence="5">Cell projection</location>
        <location evidence="5">Lamellipodium</location>
    </subcellularLocation>
    <subcellularLocation>
        <location evidence="5">Cell projection</location>
        <location evidence="5">Filopodium</location>
    </subcellularLocation>
    <subcellularLocation>
        <location evidence="2">Cytoplasmic vesicle</location>
        <location evidence="2">Autophagosome</location>
    </subcellularLocation>
    <subcellularLocation>
        <location evidence="2">Cytoplasm</location>
        <location evidence="2">Cytoskeleton</location>
        <location evidence="2">Microtubule organizing center</location>
        <location evidence="2">Centrosome</location>
        <location evidence="2">Centriole</location>
    </subcellularLocation>
    <text evidence="1 2">Localization to the endosome membrane is mediated via its interaction with WASHC2. Localizes to MMP14-positive late endosomes and transiently to invadipodia (By similarity). Localized to Salmonella typhimurium entry sites (By similarity).</text>
</comment>
<comment type="domain">
    <text evidence="5 6">The VCA (verprolin, cofilin, acidic) domain promotes actin polymerization by the Arp2/3 complex in vitro.</text>
</comment>
<comment type="miscellaneous">
    <text evidence="9">WASH genes duplicated to multiple chromosomal ends during primate evolution, with highest copy number reached in humans, whose WASH repertoires probably vary extensively among individuals (PubMed:18159949). It is therefore difficult to determine which gene is functional or not. The telomeric region of chromosome 9p is paralogous to the pericentromeric regions of chromosome 9 as well as to 2q. Paralogous regions contain 7 transcriptional units. Duplicated WASH genes are also present in the Xq/Yq pseudoautosomal region, as well as on chromosome 1 and 15. The chromosome 16 copy seems to be a pseudogene.</text>
</comment>
<comment type="similarity">
    <text evidence="8">Belongs to the WASH1 family.</text>
</comment>
<feature type="chain" id="PRO_0000390962" description="Putative WAS protein family homolog 3">
    <location>
        <begin position="1"/>
        <end position="463"/>
    </location>
</feature>
<feature type="domain" description="WH2" evidence="3">
    <location>
        <begin position="359"/>
        <end position="381"/>
    </location>
</feature>
<feature type="region of interest" description="WHD1">
    <location>
        <begin position="1"/>
        <end position="165"/>
    </location>
</feature>
<feature type="region of interest" description="Required for WASH complex assembly" evidence="7">
    <location>
        <begin position="1"/>
        <end position="54"/>
    </location>
</feature>
<feature type="region of interest" description="Disordered" evidence="4">
    <location>
        <begin position="295"/>
        <end position="463"/>
    </location>
</feature>
<feature type="region of interest" description="VCA" evidence="7">
    <location>
        <begin position="347"/>
        <end position="463"/>
    </location>
</feature>
<feature type="compositionally biased region" description="Pro residues" evidence="4">
    <location>
        <begin position="300"/>
        <end position="312"/>
    </location>
</feature>
<feature type="compositionally biased region" description="Basic and acidic residues" evidence="4">
    <location>
        <begin position="380"/>
        <end position="396"/>
    </location>
</feature>
<feature type="compositionally biased region" description="Gly residues" evidence="4">
    <location>
        <begin position="422"/>
        <end position="434"/>
    </location>
</feature>
<feature type="compositionally biased region" description="Acidic residues" evidence="4">
    <location>
        <begin position="454"/>
        <end position="463"/>
    </location>
</feature>
<feature type="cross-link" description="Glycyl lysine isopeptide (Lys-Gly) (interchain with G-Cter in ubiquitin)" evidence="1">
    <location>
        <position position="218"/>
    </location>
</feature>
<feature type="mutagenesis site" description="No effect on WASH complex assembly." evidence="7">
    <original>W</original>
    <variation>A</variation>
    <location>
        <position position="461"/>
    </location>
</feature>
<feature type="sequence conflict" description="In Ref. 2; BC048328." evidence="8" ref="2">
    <original>Q</original>
    <variation>R</variation>
    <location>
        <position position="54"/>
    </location>
</feature>
<feature type="sequence conflict" description="In Ref. 2; BC048328." evidence="8" ref="2">
    <original>P</original>
    <variation>S</variation>
    <location>
        <position position="119"/>
    </location>
</feature>
<feature type="sequence conflict" description="In Ref. 2; BC048328." evidence="8" ref="2">
    <original>D</original>
    <variation>LKY</variation>
    <location>
        <position position="139"/>
    </location>
</feature>
<feature type="sequence conflict" description="In Ref. 2; BC048328." evidence="8" ref="2">
    <original>G</original>
    <variation>Y</variation>
    <location>
        <position position="181"/>
    </location>
</feature>
<feature type="sequence conflict" description="In Ref. 2; BC048328." evidence="8" ref="2">
    <original>T</original>
    <variation>A</variation>
    <location>
        <position position="255"/>
    </location>
</feature>
<feature type="sequence conflict" description="In Ref. 2; BC048328." evidence="8" ref="2">
    <original>I</original>
    <variation>S</variation>
    <location>
        <position position="261"/>
    </location>
</feature>
<feature type="sequence conflict" description="In Ref. 2; BC048328." evidence="8" ref="2">
    <original>V</original>
    <variation>A</variation>
    <location>
        <position position="292"/>
    </location>
</feature>
<feature type="sequence conflict" description="In Ref. 2; BC048328." evidence="8" ref="2">
    <original>T</original>
    <variation>TAPP</variation>
    <location>
        <position position="300"/>
    </location>
</feature>
<feature type="sequence conflict" description="In Ref. 2; BC048328." evidence="8" ref="2">
    <original>P</original>
    <variation>S</variation>
    <location>
        <position position="319"/>
    </location>
</feature>
<feature type="sequence conflict" description="In Ref. 2; BC048328." evidence="8" ref="2">
    <original>M</original>
    <variation>V</variation>
    <location>
        <position position="381"/>
    </location>
</feature>
<feature type="sequence conflict" description="In Ref. 2; BC048328." evidence="8" ref="2">
    <original>Q</original>
    <variation>K</variation>
    <location>
        <position position="390"/>
    </location>
</feature>
<feature type="sequence conflict" description="In Ref. 2; BC048328." evidence="8" ref="2">
    <original>H</original>
    <variation>D</variation>
    <location>
        <position position="405"/>
    </location>
</feature>
<keyword id="KW-0009">Actin-binding</keyword>
<keyword id="KW-0966">Cell projection</keyword>
<keyword id="KW-0963">Cytoplasm</keyword>
<keyword id="KW-0968">Cytoplasmic vesicle</keyword>
<keyword id="KW-0206">Cytoskeleton</keyword>
<keyword id="KW-0967">Endosome</keyword>
<keyword id="KW-1017">Isopeptide bond</keyword>
<keyword id="KW-0472">Membrane</keyword>
<keyword id="KW-1185">Reference proteome</keyword>
<keyword id="KW-0813">Transport</keyword>
<keyword id="KW-0832">Ubl conjugation</keyword>
<sequence>MTPVRMQHSLAGQTYAVPLIQPDLRREEAVQQMADALQYLQKVSGDIFSRISQQVEQSRSQVQAIGEKVSLAQAKIEKIKGSKKAIKVFSSAKYPAPERLQEYGSIFTGAQDPGLQRRPRHRIQSKHRPLDERALQEKDFPVCVSTKPEPEDDAEEGLGGLPSNISSVSSLLLFNTTENLGKKYVFLDPLAGAVTKTHVMLGAETEEKLFDAPLSISKREQLEQQVPENYFYVPDLGQVPEIDVPSYLPDLPGITNDLMYIADLGPGIAPSAPGTIPELPTFHTEVAEPLKVDLQDGVLTPPPPPPPPPPAPEVLASAPPLPPSTAAPVGQGARQDDSSSSASPSVQGAPREVVDPSGGRATLLESIRQAGGIGKAKLRSMKERKLEKKQQKEQEQVRATSQGGHLMSDLFNKLVMRRKGISGKGPGAGEGPGGAFARVSDSIPPLPPPQQPQAEEDEDDWES</sequence>
<reference key="1">
    <citation type="journal article" date="2006" name="Nature">
        <title>Analysis of the DNA sequence and duplication history of human chromosome 15.</title>
        <authorList>
            <person name="Zody M.C."/>
            <person name="Garber M."/>
            <person name="Sharpe T."/>
            <person name="Young S.K."/>
            <person name="Rowen L."/>
            <person name="O'Neill K."/>
            <person name="Whittaker C.A."/>
            <person name="Kamal M."/>
            <person name="Chang J.L."/>
            <person name="Cuomo C.A."/>
            <person name="Dewar K."/>
            <person name="FitzGerald M.G."/>
            <person name="Kodira C.D."/>
            <person name="Madan A."/>
            <person name="Qin S."/>
            <person name="Yang X."/>
            <person name="Abbasi N."/>
            <person name="Abouelleil A."/>
            <person name="Arachchi H.M."/>
            <person name="Baradarani L."/>
            <person name="Birditt B."/>
            <person name="Bloom S."/>
            <person name="Bloom T."/>
            <person name="Borowsky M.L."/>
            <person name="Burke J."/>
            <person name="Butler J."/>
            <person name="Cook A."/>
            <person name="DeArellano K."/>
            <person name="DeCaprio D."/>
            <person name="Dorris L. III"/>
            <person name="Dors M."/>
            <person name="Eichler E.E."/>
            <person name="Engels R."/>
            <person name="Fahey J."/>
            <person name="Fleetwood P."/>
            <person name="Friedman C."/>
            <person name="Gearin G."/>
            <person name="Hall J.L."/>
            <person name="Hensley G."/>
            <person name="Johnson E."/>
            <person name="Jones C."/>
            <person name="Kamat A."/>
            <person name="Kaur A."/>
            <person name="Locke D.P."/>
            <person name="Madan A."/>
            <person name="Munson G."/>
            <person name="Jaffe D.B."/>
            <person name="Lui A."/>
            <person name="Macdonald P."/>
            <person name="Mauceli E."/>
            <person name="Naylor J.W."/>
            <person name="Nesbitt R."/>
            <person name="Nicol R."/>
            <person name="O'Leary S.B."/>
            <person name="Ratcliffe A."/>
            <person name="Rounsley S."/>
            <person name="She X."/>
            <person name="Sneddon K.M.B."/>
            <person name="Stewart S."/>
            <person name="Sougnez C."/>
            <person name="Stone S.M."/>
            <person name="Topham K."/>
            <person name="Vincent D."/>
            <person name="Wang S."/>
            <person name="Zimmer A.R."/>
            <person name="Birren B.W."/>
            <person name="Hood L."/>
            <person name="Lander E.S."/>
            <person name="Nusbaum C."/>
        </authorList>
    </citation>
    <scope>NUCLEOTIDE SEQUENCE [LARGE SCALE GENOMIC DNA]</scope>
</reference>
<reference key="2">
    <citation type="journal article" date="2004" name="Genome Res.">
        <title>The status, quality, and expansion of the NIH full-length cDNA project: the Mammalian Gene Collection (MGC).</title>
        <authorList>
            <consortium name="The MGC Project Team"/>
        </authorList>
    </citation>
    <scope>NUCLEOTIDE SEQUENCE [LARGE SCALE MRNA]</scope>
    <source>
        <tissue>Brain</tissue>
    </source>
</reference>
<reference key="3">
    <citation type="journal article" date="2000" name="Hum. Mol. Genet.">
        <title>Differentially regulated and evolved genes in the fully sequenced Xq/Yq pseudoautosomal region.</title>
        <authorList>
            <person name="Ciccodicola A."/>
            <person name="D'Esposito M."/>
            <person name="Esposito T."/>
            <person name="Gianfrancesco F."/>
            <person name="Migliaccio C."/>
            <person name="Miano M.G."/>
            <person name="Matarazzo M.R."/>
            <person name="Vacca M."/>
            <person name="Franze A."/>
            <person name="Cuccurese M."/>
            <person name="Cocchia M."/>
            <person name="Curci A."/>
            <person name="Terracciano A."/>
            <person name="Torino A."/>
            <person name="Cocchia S."/>
            <person name="Mercadante G."/>
            <person name="Pannone E."/>
            <person name="Archidiacono N."/>
            <person name="Rocchi M."/>
            <person name="Schlessinger D."/>
            <person name="D'Urso M."/>
        </authorList>
    </citation>
    <scope>GENE DUPLICATION</scope>
    <scope>FUNCTION</scope>
    <scope>DOMAIN</scope>
    <scope>SUBCELLULAR LOCATION</scope>
</reference>
<reference key="4">
    <citation type="journal article" date="2007" name="PLoS Genet.">
        <title>Human subtelomeric WASH genes encode a new subclass of the WASP family.</title>
        <authorList>
            <person name="Linardopoulou E.V."/>
            <person name="Parghi S.S."/>
            <person name="Friedman C."/>
            <person name="Osborn G.E."/>
            <person name="Parkhurst S.M."/>
            <person name="Trask B.J."/>
        </authorList>
    </citation>
    <scope>GENE DUPLICATION</scope>
</reference>
<reference key="5">
    <citation type="journal article" date="2010" name="Cytoskeleton">
        <title>WASH and the Arp2/3 complex regulate endosome shape and trafficking.</title>
        <authorList>
            <person name="Duleh S.N."/>
            <person name="Welch M.D."/>
        </authorList>
    </citation>
    <scope>FUNCTION</scope>
    <scope>SUBCELLULAR LOCATION</scope>
</reference>
<reference key="6">
    <citation type="journal article" date="2010" name="Proc. Natl. Acad. Sci. U.S.A.">
        <title>WASH and WAVE actin regulators of the Wiskott-Aldrich syndrome protein (WASP) family are controlled by analogous structurally related complexes.</title>
        <authorList>
            <person name="Jia D."/>
            <person name="Gomez T.S."/>
            <person name="Metlagel Z."/>
            <person name="Umetani J."/>
            <person name="Otwinowski Z."/>
            <person name="Rosen M.K."/>
            <person name="Billadeau D.D."/>
        </authorList>
    </citation>
    <scope>SUBUNIT</scope>
    <scope>FUNCTION OF THE WASH CORE COMPLEX</scope>
    <scope>MUTAGENESIS OF TRP-461</scope>
    <scope>SUBCELLULAR LOCATION</scope>
</reference>
<dbReference type="EMBL" id="AC140725">
    <property type="status" value="NOT_ANNOTATED_CDS"/>
    <property type="molecule type" value="Genomic_DNA"/>
</dbReference>
<dbReference type="EMBL" id="BC048328">
    <property type="status" value="NOT_ANNOTATED_CDS"/>
    <property type="molecule type" value="mRNA"/>
</dbReference>
<dbReference type="SMR" id="C4AMC7"/>
<dbReference type="ComplexPortal" id="CPX-1169">
    <property type="entry name" value="WASH complex, variant WASH3P/WASHC2C"/>
</dbReference>
<dbReference type="ComplexPortal" id="CPX-1174">
    <property type="entry name" value="WASH complex, variant WASH3P/WASHC2A"/>
</dbReference>
<dbReference type="FunCoup" id="C4AMC7">
    <property type="interactions" value="158"/>
</dbReference>
<dbReference type="IntAct" id="C4AMC7">
    <property type="interactions" value="29"/>
</dbReference>
<dbReference type="BioMuta" id="HGNC:24362"/>
<dbReference type="jPOST" id="C4AMC7"/>
<dbReference type="MassIVE" id="C4AMC7"/>
<dbReference type="PeptideAtlas" id="C4AMC7"/>
<dbReference type="ProteomicsDB" id="7594"/>
<dbReference type="Pumba" id="C4AMC7"/>
<dbReference type="AGR" id="HGNC:24362"/>
<dbReference type="GeneCards" id="WASH3P"/>
<dbReference type="HGNC" id="HGNC:24362">
    <property type="gene designation" value="WASH3P"/>
</dbReference>
<dbReference type="neXtProt" id="NX_C4AMC7"/>
<dbReference type="InParanoid" id="C4AMC7"/>
<dbReference type="PAN-GO" id="C4AMC7">
    <property type="GO annotations" value="9 GO annotations based on evolutionary models"/>
</dbReference>
<dbReference type="PathwayCommons" id="C4AMC7"/>
<dbReference type="SignaLink" id="C4AMC7"/>
<dbReference type="ChiTaRS" id="WASH3P">
    <property type="organism name" value="human"/>
</dbReference>
<dbReference type="Pharos" id="C4AMC7">
    <property type="development level" value="Tbio"/>
</dbReference>
<dbReference type="PRO" id="PR:C4AMC7"/>
<dbReference type="Proteomes" id="UP000005640">
    <property type="component" value="Unplaced"/>
</dbReference>
<dbReference type="RNAct" id="C4AMC7">
    <property type="molecule type" value="protein"/>
</dbReference>
<dbReference type="GO" id="GO:0005776">
    <property type="term" value="C:autophagosome"/>
    <property type="evidence" value="ECO:0007669"/>
    <property type="project" value="UniProtKB-SubCell"/>
</dbReference>
<dbReference type="GO" id="GO:0005814">
    <property type="term" value="C:centriole"/>
    <property type="evidence" value="ECO:0007669"/>
    <property type="project" value="UniProtKB-SubCell"/>
</dbReference>
<dbReference type="GO" id="GO:0005829">
    <property type="term" value="C:cytosol"/>
    <property type="evidence" value="ECO:0007669"/>
    <property type="project" value="GOC"/>
</dbReference>
<dbReference type="GO" id="GO:0005769">
    <property type="term" value="C:early endosome"/>
    <property type="evidence" value="ECO:0000314"/>
    <property type="project" value="UniProtKB"/>
</dbReference>
<dbReference type="GO" id="GO:0031901">
    <property type="term" value="C:early endosome membrane"/>
    <property type="evidence" value="ECO:0000303"/>
    <property type="project" value="ComplexPortal"/>
</dbReference>
<dbReference type="GO" id="GO:0030175">
    <property type="term" value="C:filopodium"/>
    <property type="evidence" value="ECO:0000314"/>
    <property type="project" value="UniProtKB"/>
</dbReference>
<dbReference type="GO" id="GO:0030027">
    <property type="term" value="C:lamellipodium"/>
    <property type="evidence" value="ECO:0000314"/>
    <property type="project" value="UniProtKB"/>
</dbReference>
<dbReference type="GO" id="GO:0055037">
    <property type="term" value="C:recycling endosome"/>
    <property type="evidence" value="ECO:0000314"/>
    <property type="project" value="UniProtKB"/>
</dbReference>
<dbReference type="GO" id="GO:0055038">
    <property type="term" value="C:recycling endosome membrane"/>
    <property type="evidence" value="ECO:0007669"/>
    <property type="project" value="UniProtKB-SubCell"/>
</dbReference>
<dbReference type="GO" id="GO:0071203">
    <property type="term" value="C:WASH complex"/>
    <property type="evidence" value="ECO:0000250"/>
    <property type="project" value="UniProtKB"/>
</dbReference>
<dbReference type="GO" id="GO:0003779">
    <property type="term" value="F:actin binding"/>
    <property type="evidence" value="ECO:0007669"/>
    <property type="project" value="UniProtKB-KW"/>
</dbReference>
<dbReference type="GO" id="GO:0043014">
    <property type="term" value="F:alpha-tubulin binding"/>
    <property type="evidence" value="ECO:0000250"/>
    <property type="project" value="UniProtKB"/>
</dbReference>
<dbReference type="GO" id="GO:0043015">
    <property type="term" value="F:gamma-tubulin binding"/>
    <property type="evidence" value="ECO:0000318"/>
    <property type="project" value="GO_Central"/>
</dbReference>
<dbReference type="GO" id="GO:0034314">
    <property type="term" value="P:Arp2/3 complex-mediated actin nucleation"/>
    <property type="evidence" value="ECO:0000314"/>
    <property type="project" value="UniProtKB"/>
</dbReference>
<dbReference type="GO" id="GO:0045022">
    <property type="term" value="P:early endosome to late endosome transport"/>
    <property type="evidence" value="ECO:0000315"/>
    <property type="project" value="UniProtKB"/>
</dbReference>
<dbReference type="GO" id="GO:0032456">
    <property type="term" value="P:endocytic recycling"/>
    <property type="evidence" value="ECO:0000318"/>
    <property type="project" value="GO_Central"/>
</dbReference>
<dbReference type="GO" id="GO:0016197">
    <property type="term" value="P:endosomal transport"/>
    <property type="evidence" value="ECO:0000250"/>
    <property type="project" value="UniProtKB"/>
</dbReference>
<dbReference type="GO" id="GO:0007032">
    <property type="term" value="P:endosome organization"/>
    <property type="evidence" value="ECO:0000315"/>
    <property type="project" value="UniProtKB"/>
</dbReference>
<dbReference type="GO" id="GO:0006887">
    <property type="term" value="P:exocytosis"/>
    <property type="evidence" value="ECO:0000318"/>
    <property type="project" value="GO_Central"/>
</dbReference>
<dbReference type="GO" id="GO:0006622">
    <property type="term" value="P:protein targeting to lysosome"/>
    <property type="evidence" value="ECO:0000315"/>
    <property type="project" value="UniProtKB"/>
</dbReference>
<dbReference type="GO" id="GO:0034315">
    <property type="term" value="P:regulation of Arp2/3 complex-mediated actin nucleation"/>
    <property type="evidence" value="ECO:0000303"/>
    <property type="project" value="ComplexPortal"/>
</dbReference>
<dbReference type="GO" id="GO:0042147">
    <property type="term" value="P:retrograde transport, endosome to Golgi"/>
    <property type="evidence" value="ECO:0000250"/>
    <property type="project" value="UniProtKB"/>
</dbReference>
<dbReference type="InterPro" id="IPR028290">
    <property type="entry name" value="WASH1"/>
</dbReference>
<dbReference type="InterPro" id="IPR021854">
    <property type="entry name" value="WASH1_WAHD"/>
</dbReference>
<dbReference type="InterPro" id="IPR003124">
    <property type="entry name" value="WH2_dom"/>
</dbReference>
<dbReference type="PANTHER" id="PTHR23331">
    <property type="entry name" value="CXYORF1"/>
    <property type="match status" value="1"/>
</dbReference>
<dbReference type="PANTHER" id="PTHR23331:SF5">
    <property type="entry name" value="WAS PROTEIN FAMILY HOMOLOG 2-RELATED"/>
    <property type="match status" value="1"/>
</dbReference>
<dbReference type="Pfam" id="PF11945">
    <property type="entry name" value="WASH_WAHD"/>
    <property type="match status" value="1"/>
</dbReference>
<dbReference type="PROSITE" id="PS51082">
    <property type="entry name" value="WH2"/>
    <property type="match status" value="1"/>
</dbReference>
<proteinExistence type="evidence at protein level"/>
<gene>
    <name type="primary">WASH3P</name>
    <name type="synonym">FAM39DP</name>
</gene>
<organism>
    <name type="scientific">Homo sapiens</name>
    <name type="common">Human</name>
    <dbReference type="NCBI Taxonomy" id="9606"/>
    <lineage>
        <taxon>Eukaryota</taxon>
        <taxon>Metazoa</taxon>
        <taxon>Chordata</taxon>
        <taxon>Craniata</taxon>
        <taxon>Vertebrata</taxon>
        <taxon>Euteleostomi</taxon>
        <taxon>Mammalia</taxon>
        <taxon>Eutheria</taxon>
        <taxon>Euarchontoglires</taxon>
        <taxon>Primates</taxon>
        <taxon>Haplorrhini</taxon>
        <taxon>Catarrhini</taxon>
        <taxon>Hominidae</taxon>
        <taxon>Homo</taxon>
    </lineage>
</organism>
<protein>
    <recommendedName>
        <fullName>Putative WAS protein family homolog 3</fullName>
    </recommendedName>
    <alternativeName>
        <fullName>Protein FAM39DP</fullName>
    </alternativeName>
</protein>
<name>WASH3_HUMAN</name>
<evidence type="ECO:0000250" key="1">
    <source>
        <dbReference type="UniProtKB" id="A8K0Z3"/>
    </source>
</evidence>
<evidence type="ECO:0000250" key="2">
    <source>
        <dbReference type="UniProtKB" id="Q8VDD8"/>
    </source>
</evidence>
<evidence type="ECO:0000255" key="3">
    <source>
        <dbReference type="PROSITE-ProRule" id="PRU00406"/>
    </source>
</evidence>
<evidence type="ECO:0000256" key="4">
    <source>
        <dbReference type="SAM" id="MobiDB-lite"/>
    </source>
</evidence>
<evidence type="ECO:0000269" key="5">
    <source>
    </source>
</evidence>
<evidence type="ECO:0000269" key="6">
    <source>
    </source>
</evidence>
<evidence type="ECO:0000269" key="7">
    <source>
    </source>
</evidence>
<evidence type="ECO:0000305" key="8"/>
<evidence type="ECO:0000305" key="9">
    <source>
    </source>
</evidence>
<accession>C4AMC7</accession>